<feature type="chain" id="PRO_0000329594" description="Polyribonucleotide nucleotidyltransferase">
    <location>
        <begin position="1"/>
        <end position="701"/>
    </location>
</feature>
<feature type="domain" description="KH" evidence="1">
    <location>
        <begin position="552"/>
        <end position="611"/>
    </location>
</feature>
<feature type="domain" description="S1 motif" evidence="1">
    <location>
        <begin position="621"/>
        <end position="689"/>
    </location>
</feature>
<feature type="binding site" evidence="1">
    <location>
        <position position="485"/>
    </location>
    <ligand>
        <name>Mg(2+)</name>
        <dbReference type="ChEBI" id="CHEBI:18420"/>
    </ligand>
</feature>
<feature type="binding site" evidence="1">
    <location>
        <position position="491"/>
    </location>
    <ligand>
        <name>Mg(2+)</name>
        <dbReference type="ChEBI" id="CHEBI:18420"/>
    </ligand>
</feature>
<proteinExistence type="inferred from homology"/>
<organism>
    <name type="scientific">Clostridium beijerinckii (strain ATCC 51743 / NCIMB 8052)</name>
    <name type="common">Clostridium acetobutylicum</name>
    <dbReference type="NCBI Taxonomy" id="290402"/>
    <lineage>
        <taxon>Bacteria</taxon>
        <taxon>Bacillati</taxon>
        <taxon>Bacillota</taxon>
        <taxon>Clostridia</taxon>
        <taxon>Eubacteriales</taxon>
        <taxon>Clostridiaceae</taxon>
        <taxon>Clostridium</taxon>
    </lineage>
</organism>
<dbReference type="EC" id="2.7.7.8" evidence="1"/>
<dbReference type="EMBL" id="CP000721">
    <property type="protein sequence ID" value="ABR33390.1"/>
    <property type="molecule type" value="Genomic_DNA"/>
</dbReference>
<dbReference type="RefSeq" id="WP_011968545.1">
    <property type="nucleotide sequence ID" value="NC_009617.1"/>
</dbReference>
<dbReference type="SMR" id="A6LSR0"/>
<dbReference type="KEGG" id="cbe:Cbei_1208"/>
<dbReference type="eggNOG" id="COG1185">
    <property type="taxonomic scope" value="Bacteria"/>
</dbReference>
<dbReference type="HOGENOM" id="CLU_004217_2_2_9"/>
<dbReference type="Proteomes" id="UP000000565">
    <property type="component" value="Chromosome"/>
</dbReference>
<dbReference type="GO" id="GO:0005829">
    <property type="term" value="C:cytosol"/>
    <property type="evidence" value="ECO:0007669"/>
    <property type="project" value="TreeGrafter"/>
</dbReference>
<dbReference type="GO" id="GO:0000175">
    <property type="term" value="F:3'-5'-RNA exonuclease activity"/>
    <property type="evidence" value="ECO:0007669"/>
    <property type="project" value="TreeGrafter"/>
</dbReference>
<dbReference type="GO" id="GO:0000287">
    <property type="term" value="F:magnesium ion binding"/>
    <property type="evidence" value="ECO:0007669"/>
    <property type="project" value="UniProtKB-UniRule"/>
</dbReference>
<dbReference type="GO" id="GO:0004654">
    <property type="term" value="F:polyribonucleotide nucleotidyltransferase activity"/>
    <property type="evidence" value="ECO:0007669"/>
    <property type="project" value="UniProtKB-UniRule"/>
</dbReference>
<dbReference type="GO" id="GO:0003723">
    <property type="term" value="F:RNA binding"/>
    <property type="evidence" value="ECO:0007669"/>
    <property type="project" value="UniProtKB-UniRule"/>
</dbReference>
<dbReference type="GO" id="GO:0006402">
    <property type="term" value="P:mRNA catabolic process"/>
    <property type="evidence" value="ECO:0007669"/>
    <property type="project" value="UniProtKB-UniRule"/>
</dbReference>
<dbReference type="GO" id="GO:0006396">
    <property type="term" value="P:RNA processing"/>
    <property type="evidence" value="ECO:0007669"/>
    <property type="project" value="InterPro"/>
</dbReference>
<dbReference type="CDD" id="cd02393">
    <property type="entry name" value="KH-I_PNPase"/>
    <property type="match status" value="1"/>
</dbReference>
<dbReference type="CDD" id="cd11363">
    <property type="entry name" value="RNase_PH_PNPase_1"/>
    <property type="match status" value="1"/>
</dbReference>
<dbReference type="CDD" id="cd11364">
    <property type="entry name" value="RNase_PH_PNPase_2"/>
    <property type="match status" value="1"/>
</dbReference>
<dbReference type="CDD" id="cd04472">
    <property type="entry name" value="S1_PNPase"/>
    <property type="match status" value="1"/>
</dbReference>
<dbReference type="FunFam" id="2.40.50.140:FF:000023">
    <property type="entry name" value="Polyribonucleotide nucleotidyltransferase"/>
    <property type="match status" value="1"/>
</dbReference>
<dbReference type="FunFam" id="3.30.1370.10:FF:000001">
    <property type="entry name" value="Polyribonucleotide nucleotidyltransferase"/>
    <property type="match status" value="1"/>
</dbReference>
<dbReference type="FunFam" id="3.30.230.70:FF:000001">
    <property type="entry name" value="Polyribonucleotide nucleotidyltransferase"/>
    <property type="match status" value="1"/>
</dbReference>
<dbReference type="FunFam" id="3.30.230.70:FF:000002">
    <property type="entry name" value="Polyribonucleotide nucleotidyltransferase"/>
    <property type="match status" value="1"/>
</dbReference>
<dbReference type="Gene3D" id="3.30.230.70">
    <property type="entry name" value="GHMP Kinase, N-terminal domain"/>
    <property type="match status" value="2"/>
</dbReference>
<dbReference type="Gene3D" id="3.30.1370.10">
    <property type="entry name" value="K Homology domain, type 1"/>
    <property type="match status" value="1"/>
</dbReference>
<dbReference type="Gene3D" id="2.40.50.140">
    <property type="entry name" value="Nucleic acid-binding proteins"/>
    <property type="match status" value="1"/>
</dbReference>
<dbReference type="HAMAP" id="MF_01595">
    <property type="entry name" value="PNPase"/>
    <property type="match status" value="1"/>
</dbReference>
<dbReference type="InterPro" id="IPR001247">
    <property type="entry name" value="ExoRNase_PH_dom1"/>
</dbReference>
<dbReference type="InterPro" id="IPR015847">
    <property type="entry name" value="ExoRNase_PH_dom2"/>
</dbReference>
<dbReference type="InterPro" id="IPR036345">
    <property type="entry name" value="ExoRNase_PH_dom2_sf"/>
</dbReference>
<dbReference type="InterPro" id="IPR004087">
    <property type="entry name" value="KH_dom"/>
</dbReference>
<dbReference type="InterPro" id="IPR004088">
    <property type="entry name" value="KH_dom_type_1"/>
</dbReference>
<dbReference type="InterPro" id="IPR036612">
    <property type="entry name" value="KH_dom_type_1_sf"/>
</dbReference>
<dbReference type="InterPro" id="IPR012340">
    <property type="entry name" value="NA-bd_OB-fold"/>
</dbReference>
<dbReference type="InterPro" id="IPR012162">
    <property type="entry name" value="PNPase"/>
</dbReference>
<dbReference type="InterPro" id="IPR027408">
    <property type="entry name" value="PNPase/RNase_PH_dom_sf"/>
</dbReference>
<dbReference type="InterPro" id="IPR015848">
    <property type="entry name" value="PNPase_PH_RNA-bd_bac/org-type"/>
</dbReference>
<dbReference type="InterPro" id="IPR036456">
    <property type="entry name" value="PNPase_PH_RNA-bd_sf"/>
</dbReference>
<dbReference type="InterPro" id="IPR020568">
    <property type="entry name" value="Ribosomal_Su5_D2-typ_SF"/>
</dbReference>
<dbReference type="InterPro" id="IPR003029">
    <property type="entry name" value="S1_domain"/>
</dbReference>
<dbReference type="NCBIfam" id="TIGR03591">
    <property type="entry name" value="polynuc_phos"/>
    <property type="match status" value="1"/>
</dbReference>
<dbReference type="NCBIfam" id="NF008805">
    <property type="entry name" value="PRK11824.1"/>
    <property type="match status" value="1"/>
</dbReference>
<dbReference type="PANTHER" id="PTHR11252">
    <property type="entry name" value="POLYRIBONUCLEOTIDE NUCLEOTIDYLTRANSFERASE"/>
    <property type="match status" value="1"/>
</dbReference>
<dbReference type="PANTHER" id="PTHR11252:SF0">
    <property type="entry name" value="POLYRIBONUCLEOTIDE NUCLEOTIDYLTRANSFERASE 1, MITOCHONDRIAL"/>
    <property type="match status" value="1"/>
</dbReference>
<dbReference type="Pfam" id="PF00013">
    <property type="entry name" value="KH_1"/>
    <property type="match status" value="1"/>
</dbReference>
<dbReference type="Pfam" id="PF03726">
    <property type="entry name" value="PNPase"/>
    <property type="match status" value="1"/>
</dbReference>
<dbReference type="Pfam" id="PF01138">
    <property type="entry name" value="RNase_PH"/>
    <property type="match status" value="2"/>
</dbReference>
<dbReference type="Pfam" id="PF03725">
    <property type="entry name" value="RNase_PH_C"/>
    <property type="match status" value="1"/>
</dbReference>
<dbReference type="Pfam" id="PF00575">
    <property type="entry name" value="S1"/>
    <property type="match status" value="1"/>
</dbReference>
<dbReference type="PIRSF" id="PIRSF005499">
    <property type="entry name" value="PNPase"/>
    <property type="match status" value="1"/>
</dbReference>
<dbReference type="SMART" id="SM00322">
    <property type="entry name" value="KH"/>
    <property type="match status" value="1"/>
</dbReference>
<dbReference type="SMART" id="SM00316">
    <property type="entry name" value="S1"/>
    <property type="match status" value="1"/>
</dbReference>
<dbReference type="SUPFAM" id="SSF54791">
    <property type="entry name" value="Eukaryotic type KH-domain (KH-domain type I)"/>
    <property type="match status" value="1"/>
</dbReference>
<dbReference type="SUPFAM" id="SSF50249">
    <property type="entry name" value="Nucleic acid-binding proteins"/>
    <property type="match status" value="1"/>
</dbReference>
<dbReference type="SUPFAM" id="SSF46915">
    <property type="entry name" value="Polynucleotide phosphorylase/guanosine pentaphosphate synthase (PNPase/GPSI), domain 3"/>
    <property type="match status" value="1"/>
</dbReference>
<dbReference type="SUPFAM" id="SSF55666">
    <property type="entry name" value="Ribonuclease PH domain 2-like"/>
    <property type="match status" value="2"/>
</dbReference>
<dbReference type="SUPFAM" id="SSF54211">
    <property type="entry name" value="Ribosomal protein S5 domain 2-like"/>
    <property type="match status" value="2"/>
</dbReference>
<dbReference type="PROSITE" id="PS50084">
    <property type="entry name" value="KH_TYPE_1"/>
    <property type="match status" value="1"/>
</dbReference>
<dbReference type="PROSITE" id="PS50126">
    <property type="entry name" value="S1"/>
    <property type="match status" value="1"/>
</dbReference>
<gene>
    <name evidence="1" type="primary">pnp</name>
    <name type="ordered locus">Cbei_1208</name>
</gene>
<comment type="function">
    <text evidence="1">Involved in mRNA degradation. Catalyzes the phosphorolysis of single-stranded polyribonucleotides processively in the 3'- to 5'-direction.</text>
</comment>
<comment type="catalytic activity">
    <reaction evidence="1">
        <text>RNA(n+1) + phosphate = RNA(n) + a ribonucleoside 5'-diphosphate</text>
        <dbReference type="Rhea" id="RHEA:22096"/>
        <dbReference type="Rhea" id="RHEA-COMP:14527"/>
        <dbReference type="Rhea" id="RHEA-COMP:17342"/>
        <dbReference type="ChEBI" id="CHEBI:43474"/>
        <dbReference type="ChEBI" id="CHEBI:57930"/>
        <dbReference type="ChEBI" id="CHEBI:140395"/>
        <dbReference type="EC" id="2.7.7.8"/>
    </reaction>
</comment>
<comment type="cofactor">
    <cofactor evidence="1">
        <name>Mg(2+)</name>
        <dbReference type="ChEBI" id="CHEBI:18420"/>
    </cofactor>
</comment>
<comment type="subcellular location">
    <subcellularLocation>
        <location evidence="1">Cytoplasm</location>
    </subcellularLocation>
</comment>
<comment type="similarity">
    <text evidence="1">Belongs to the polyribonucleotide nucleotidyltransferase family.</text>
</comment>
<protein>
    <recommendedName>
        <fullName evidence="1">Polyribonucleotide nucleotidyltransferase</fullName>
        <ecNumber evidence="1">2.7.7.8</ecNumber>
    </recommendedName>
    <alternativeName>
        <fullName evidence="1">Polynucleotide phosphorylase</fullName>
        <shortName evidence="1">PNPase</shortName>
    </alternativeName>
</protein>
<name>PNP_CLOB8</name>
<sequence length="701" mass="76982">MNNVLTTEIAGRELKVEFGKVGMLSNAATFTSYGDTVILTNVNASEQPREGIDFFPLSVEYEERLYAVGKIPGGFIKREGRPSEKAILNGRAVDRTLRPLFPKGYRNDVQVVTTVVSVEKDNLPEILAINAASLALCLSSIPYTIPAAAVQVGIIDGKFVTNPDTQGREKSILHLTVCATKERVMMIEAGGQEIPEDTMIDAIKYGFDECQKIIAFQEEAVAKFGKKKDEPVLYAVDPELEKDVKEFASDMIKEAMYIMEKDERNAAVDAVYEKVNEAFGEKYADKMGDIKEVLYTMQKKVVRHMLLKDKRRPDGRAFDQIRPLGCEIGILPRTHGTGLFTRGLTQVMTVATLGSISEIQILDGIDEAQSKRYMHHYNFPGYSVGEVKPLRGPGRREIGHGALAERALEPLIPSEEEFPYTIRLVSEVLSSNGSTSQASVCGSTLALLDAGVPIKRPAAGIAMGLITSEDLSEEAVLTDIQGIEDFFGDMDFKVAGTTEGITSIQVDTKLQGFSFNVVENAIRDARKARLTIIDKINECISTPKEDVSLYAPKTQIMSINPDKIRDVIGAGGKVINKIIQDTGVKIDIKEDGTVFVSSTDHNGVNEAIKIIEGLTKEVKAGEVYLGKVTKITTFGAFVEILPSKEGLVHISKLAKERVNKVEDVVSIGDEILVKVTEIDNQGRINLSRKDALVEQENKEEK</sequence>
<reference key="1">
    <citation type="submission" date="2007-06" db="EMBL/GenBank/DDBJ databases">
        <title>Complete sequence of Clostridium beijerinckii NCIMB 8052.</title>
        <authorList>
            <consortium name="US DOE Joint Genome Institute"/>
            <person name="Copeland A."/>
            <person name="Lucas S."/>
            <person name="Lapidus A."/>
            <person name="Barry K."/>
            <person name="Detter J.C."/>
            <person name="Glavina del Rio T."/>
            <person name="Hammon N."/>
            <person name="Israni S."/>
            <person name="Dalin E."/>
            <person name="Tice H."/>
            <person name="Pitluck S."/>
            <person name="Sims D."/>
            <person name="Brettin T."/>
            <person name="Bruce D."/>
            <person name="Tapia R."/>
            <person name="Brainard J."/>
            <person name="Schmutz J."/>
            <person name="Larimer F."/>
            <person name="Land M."/>
            <person name="Hauser L."/>
            <person name="Kyrpides N."/>
            <person name="Mikhailova N."/>
            <person name="Bennet G."/>
            <person name="Cann I."/>
            <person name="Chen J.-S."/>
            <person name="Contreras A.L."/>
            <person name="Jones D."/>
            <person name="Kashket E."/>
            <person name="Mitchell W."/>
            <person name="Stoddard S."/>
            <person name="Schwarz W."/>
            <person name="Qureshi N."/>
            <person name="Young M."/>
            <person name="Shi Z."/>
            <person name="Ezeji T."/>
            <person name="White B."/>
            <person name="Blaschek H."/>
            <person name="Richardson P."/>
        </authorList>
    </citation>
    <scope>NUCLEOTIDE SEQUENCE [LARGE SCALE GENOMIC DNA]</scope>
    <source>
        <strain>ATCC 51743 / NCIMB 8052</strain>
    </source>
</reference>
<accession>A6LSR0</accession>
<keyword id="KW-0963">Cytoplasm</keyword>
<keyword id="KW-0460">Magnesium</keyword>
<keyword id="KW-0479">Metal-binding</keyword>
<keyword id="KW-0548">Nucleotidyltransferase</keyword>
<keyword id="KW-0694">RNA-binding</keyword>
<keyword id="KW-0808">Transferase</keyword>
<evidence type="ECO:0000255" key="1">
    <source>
        <dbReference type="HAMAP-Rule" id="MF_01595"/>
    </source>
</evidence>